<feature type="chain" id="PRO_0000375739" description="Succinyl-diaminopimelate desuccinylase">
    <location>
        <begin position="1"/>
        <end position="376"/>
    </location>
</feature>
<feature type="active site" evidence="1">
    <location>
        <position position="69"/>
    </location>
</feature>
<feature type="active site" description="Proton acceptor" evidence="1">
    <location>
        <position position="134"/>
    </location>
</feature>
<feature type="binding site" evidence="1">
    <location>
        <position position="67"/>
    </location>
    <ligand>
        <name>Zn(2+)</name>
        <dbReference type="ChEBI" id="CHEBI:29105"/>
        <label>1</label>
    </ligand>
</feature>
<feature type="binding site" evidence="1">
    <location>
        <position position="100"/>
    </location>
    <ligand>
        <name>Zn(2+)</name>
        <dbReference type="ChEBI" id="CHEBI:29105"/>
        <label>1</label>
    </ligand>
</feature>
<feature type="binding site" evidence="1">
    <location>
        <position position="100"/>
    </location>
    <ligand>
        <name>Zn(2+)</name>
        <dbReference type="ChEBI" id="CHEBI:29105"/>
        <label>2</label>
    </ligand>
</feature>
<feature type="binding site" evidence="1">
    <location>
        <position position="135"/>
    </location>
    <ligand>
        <name>Zn(2+)</name>
        <dbReference type="ChEBI" id="CHEBI:29105"/>
        <label>2</label>
    </ligand>
</feature>
<feature type="binding site" evidence="1">
    <location>
        <position position="163"/>
    </location>
    <ligand>
        <name>Zn(2+)</name>
        <dbReference type="ChEBI" id="CHEBI:29105"/>
        <label>1</label>
    </ligand>
</feature>
<feature type="binding site" evidence="1">
    <location>
        <position position="349"/>
    </location>
    <ligand>
        <name>Zn(2+)</name>
        <dbReference type="ChEBI" id="CHEBI:29105"/>
        <label>2</label>
    </ligand>
</feature>
<keyword id="KW-0028">Amino-acid biosynthesis</keyword>
<keyword id="KW-0170">Cobalt</keyword>
<keyword id="KW-0220">Diaminopimelate biosynthesis</keyword>
<keyword id="KW-0378">Hydrolase</keyword>
<keyword id="KW-0457">Lysine biosynthesis</keyword>
<keyword id="KW-0479">Metal-binding</keyword>
<keyword id="KW-1185">Reference proteome</keyword>
<keyword id="KW-0862">Zinc</keyword>
<protein>
    <recommendedName>
        <fullName evidence="1">Succinyl-diaminopimelate desuccinylase</fullName>
        <shortName evidence="1">SDAP desuccinylase</shortName>
        <ecNumber evidence="1">3.5.1.18</ecNumber>
    </recommendedName>
    <alternativeName>
        <fullName evidence="1">N-succinyl-LL-2,6-diaminoheptanedioate amidohydrolase</fullName>
    </alternativeName>
</protein>
<sequence>MSQDVLTLAQDLISRESVTPLDEGCQQLMADRLSAKGFDIESMVFDDTTNMWARRGNSGPLFCFAGHTDVVPVGDLNRWHTPPFDPVVIDGYLHGRGAADMKGSLAAMLVATERFVEKHPDHNGSIAFLITSDEEGPFINGTTRVIDTLEARNEKITWALVGEPSSTHKLGDIVKNGRRGSLTGNLTVNGIQGHVAYPHLADNPIHNAAPALDELARMKWDNGNEFFPPTSFQIANINGGTGASNVIPGSLEVMFNFRYSTEVTAEELIKRVLNILDAHGLDYDISWTFNGLPFLTGEGPLLDATRDAIKQVTGTDTDPQTSGGTSDGRFIAPTGAHVIELGPVNATIHKVNECVKVADLEQLALCYEVILEKLLC</sequence>
<comment type="function">
    <text evidence="1">Catalyzes the hydrolysis of N-succinyl-L,L-diaminopimelic acid (SDAP), forming succinate and LL-2,6-diaminopimelate (DAP), an intermediate involved in the bacterial biosynthesis of lysine and meso-diaminopimelic acid, an essential component of bacterial cell walls.</text>
</comment>
<comment type="catalytic activity">
    <reaction evidence="1">
        <text>N-succinyl-(2S,6S)-2,6-diaminopimelate + H2O = (2S,6S)-2,6-diaminopimelate + succinate</text>
        <dbReference type="Rhea" id="RHEA:22608"/>
        <dbReference type="ChEBI" id="CHEBI:15377"/>
        <dbReference type="ChEBI" id="CHEBI:30031"/>
        <dbReference type="ChEBI" id="CHEBI:57609"/>
        <dbReference type="ChEBI" id="CHEBI:58087"/>
        <dbReference type="EC" id="3.5.1.18"/>
    </reaction>
</comment>
<comment type="cofactor">
    <cofactor evidence="1">
        <name>Zn(2+)</name>
        <dbReference type="ChEBI" id="CHEBI:29105"/>
    </cofactor>
    <cofactor evidence="1">
        <name>Co(2+)</name>
        <dbReference type="ChEBI" id="CHEBI:48828"/>
    </cofactor>
    <text evidence="1">Binds 2 Zn(2+) or Co(2+) ions per subunit.</text>
</comment>
<comment type="pathway">
    <text evidence="1">Amino-acid biosynthesis; L-lysine biosynthesis via DAP pathway; LL-2,6-diaminopimelate from (S)-tetrahydrodipicolinate (succinylase route): step 3/3.</text>
</comment>
<comment type="subunit">
    <text evidence="1">Homodimer.</text>
</comment>
<comment type="similarity">
    <text evidence="1">Belongs to the peptidase M20A family. DapE subfamily.</text>
</comment>
<proteinExistence type="inferred from homology"/>
<dbReference type="EC" id="3.5.1.18" evidence="1"/>
<dbReference type="EMBL" id="CP000821">
    <property type="protein sequence ID" value="ABV37027.1"/>
    <property type="molecule type" value="Genomic_DNA"/>
</dbReference>
<dbReference type="RefSeq" id="WP_012142762.1">
    <property type="nucleotide sequence ID" value="NC_009831.1"/>
</dbReference>
<dbReference type="SMR" id="A8FW04"/>
<dbReference type="STRING" id="425104.Ssed_2418"/>
<dbReference type="KEGG" id="sse:Ssed_2418"/>
<dbReference type="eggNOG" id="COG0624">
    <property type="taxonomic scope" value="Bacteria"/>
</dbReference>
<dbReference type="HOGENOM" id="CLU_021802_4_0_6"/>
<dbReference type="OrthoDB" id="9809784at2"/>
<dbReference type="UniPathway" id="UPA00034">
    <property type="reaction ID" value="UER00021"/>
</dbReference>
<dbReference type="Proteomes" id="UP000002015">
    <property type="component" value="Chromosome"/>
</dbReference>
<dbReference type="GO" id="GO:0008777">
    <property type="term" value="F:acetylornithine deacetylase activity"/>
    <property type="evidence" value="ECO:0007669"/>
    <property type="project" value="TreeGrafter"/>
</dbReference>
<dbReference type="GO" id="GO:0050897">
    <property type="term" value="F:cobalt ion binding"/>
    <property type="evidence" value="ECO:0007669"/>
    <property type="project" value="UniProtKB-UniRule"/>
</dbReference>
<dbReference type="GO" id="GO:0009014">
    <property type="term" value="F:succinyl-diaminopimelate desuccinylase activity"/>
    <property type="evidence" value="ECO:0007669"/>
    <property type="project" value="UniProtKB-UniRule"/>
</dbReference>
<dbReference type="GO" id="GO:0008270">
    <property type="term" value="F:zinc ion binding"/>
    <property type="evidence" value="ECO:0007669"/>
    <property type="project" value="UniProtKB-UniRule"/>
</dbReference>
<dbReference type="GO" id="GO:0019877">
    <property type="term" value="P:diaminopimelate biosynthetic process"/>
    <property type="evidence" value="ECO:0007669"/>
    <property type="project" value="UniProtKB-UniRule"/>
</dbReference>
<dbReference type="GO" id="GO:0006526">
    <property type="term" value="P:L-arginine biosynthetic process"/>
    <property type="evidence" value="ECO:0007669"/>
    <property type="project" value="TreeGrafter"/>
</dbReference>
<dbReference type="GO" id="GO:0009089">
    <property type="term" value="P:lysine biosynthetic process via diaminopimelate"/>
    <property type="evidence" value="ECO:0007669"/>
    <property type="project" value="UniProtKB-UniRule"/>
</dbReference>
<dbReference type="CDD" id="cd03891">
    <property type="entry name" value="M20_DapE_proteobac"/>
    <property type="match status" value="1"/>
</dbReference>
<dbReference type="FunFam" id="3.30.70.360:FF:000011">
    <property type="entry name" value="Succinyl-diaminopimelate desuccinylase"/>
    <property type="match status" value="1"/>
</dbReference>
<dbReference type="FunFam" id="3.40.630.10:FF:000005">
    <property type="entry name" value="Succinyl-diaminopimelate desuccinylase"/>
    <property type="match status" value="1"/>
</dbReference>
<dbReference type="Gene3D" id="3.40.630.10">
    <property type="entry name" value="Zn peptidases"/>
    <property type="match status" value="2"/>
</dbReference>
<dbReference type="HAMAP" id="MF_01690">
    <property type="entry name" value="DapE"/>
    <property type="match status" value="1"/>
</dbReference>
<dbReference type="InterPro" id="IPR001261">
    <property type="entry name" value="ArgE/DapE_CS"/>
</dbReference>
<dbReference type="InterPro" id="IPR036264">
    <property type="entry name" value="Bact_exopeptidase_dim_dom"/>
</dbReference>
<dbReference type="InterPro" id="IPR005941">
    <property type="entry name" value="DapE_proteobac"/>
</dbReference>
<dbReference type="InterPro" id="IPR002933">
    <property type="entry name" value="Peptidase_M20"/>
</dbReference>
<dbReference type="InterPro" id="IPR011650">
    <property type="entry name" value="Peptidase_M20_dimer"/>
</dbReference>
<dbReference type="InterPro" id="IPR050072">
    <property type="entry name" value="Peptidase_M20A"/>
</dbReference>
<dbReference type="NCBIfam" id="TIGR01246">
    <property type="entry name" value="dapE_proteo"/>
    <property type="match status" value="1"/>
</dbReference>
<dbReference type="NCBIfam" id="NF009557">
    <property type="entry name" value="PRK13009.1"/>
    <property type="match status" value="1"/>
</dbReference>
<dbReference type="PANTHER" id="PTHR43808">
    <property type="entry name" value="ACETYLORNITHINE DEACETYLASE"/>
    <property type="match status" value="1"/>
</dbReference>
<dbReference type="PANTHER" id="PTHR43808:SF31">
    <property type="entry name" value="N-ACETYL-L-CITRULLINE DEACETYLASE"/>
    <property type="match status" value="1"/>
</dbReference>
<dbReference type="Pfam" id="PF07687">
    <property type="entry name" value="M20_dimer"/>
    <property type="match status" value="1"/>
</dbReference>
<dbReference type="Pfam" id="PF01546">
    <property type="entry name" value="Peptidase_M20"/>
    <property type="match status" value="1"/>
</dbReference>
<dbReference type="SUPFAM" id="SSF55031">
    <property type="entry name" value="Bacterial exopeptidase dimerisation domain"/>
    <property type="match status" value="1"/>
</dbReference>
<dbReference type="SUPFAM" id="SSF53187">
    <property type="entry name" value="Zn-dependent exopeptidases"/>
    <property type="match status" value="1"/>
</dbReference>
<dbReference type="PROSITE" id="PS00759">
    <property type="entry name" value="ARGE_DAPE_CPG2_2"/>
    <property type="match status" value="1"/>
</dbReference>
<gene>
    <name evidence="1" type="primary">dapE</name>
    <name type="ordered locus">Ssed_2418</name>
</gene>
<evidence type="ECO:0000255" key="1">
    <source>
        <dbReference type="HAMAP-Rule" id="MF_01690"/>
    </source>
</evidence>
<organism>
    <name type="scientific">Shewanella sediminis (strain HAW-EB3)</name>
    <dbReference type="NCBI Taxonomy" id="425104"/>
    <lineage>
        <taxon>Bacteria</taxon>
        <taxon>Pseudomonadati</taxon>
        <taxon>Pseudomonadota</taxon>
        <taxon>Gammaproteobacteria</taxon>
        <taxon>Alteromonadales</taxon>
        <taxon>Shewanellaceae</taxon>
        <taxon>Shewanella</taxon>
    </lineage>
</organism>
<reference key="1">
    <citation type="submission" date="2007-08" db="EMBL/GenBank/DDBJ databases">
        <title>Complete sequence of Shewanella sediminis HAW-EB3.</title>
        <authorList>
            <consortium name="US DOE Joint Genome Institute"/>
            <person name="Copeland A."/>
            <person name="Lucas S."/>
            <person name="Lapidus A."/>
            <person name="Barry K."/>
            <person name="Glavina del Rio T."/>
            <person name="Dalin E."/>
            <person name="Tice H."/>
            <person name="Pitluck S."/>
            <person name="Chertkov O."/>
            <person name="Brettin T."/>
            <person name="Bruce D."/>
            <person name="Detter J.C."/>
            <person name="Han C."/>
            <person name="Schmutz J."/>
            <person name="Larimer F."/>
            <person name="Land M."/>
            <person name="Hauser L."/>
            <person name="Kyrpides N."/>
            <person name="Kim E."/>
            <person name="Zhao J.-S."/>
            <person name="Richardson P."/>
        </authorList>
    </citation>
    <scope>NUCLEOTIDE SEQUENCE [LARGE SCALE GENOMIC DNA]</scope>
    <source>
        <strain>HAW-EB3</strain>
    </source>
</reference>
<accession>A8FW04</accession>
<name>DAPE_SHESH</name>